<proteinExistence type="inferred from homology"/>
<sequence>MASFVDRVVLHVSGGTGGHGCVSVHREKFKPLGGPDGGNGGNGGDVILRVDHQTTTLLDYHHAPHRHATNGGPGMGDWRGGKNGETLVLPVPDGTVVKSKDGTVLADLVGEGTEYIAAAGGPGGLGNAALSSQKRRAPGFALLGIEGESSDIVLELKSIADIALVGFPSAGKSSLIAAMSAARPKIADYPFTTLIPNLGVVQAGDVRFTIADVPGLIEGASEGKGLGHNFLRHVERCAALVHVLDCGTLESDRDPLSDLSIIETELEKYAVDMSYAGQDGEVVPLNHRPRLVALNKVDLPDGKDMAEFVRPELESRGYRVFEVSATSHEGLRQLGFAMAEIVKAARDAVEAAPPKVTPTVLRPRAVNETGFRIRREEKAHEPLFRVLGDKPVRWVKQTDFTNEEAIGYLADRLARLGVETELFKMGAKPGDTVVIGEDDGVVFDWEPTMMAGAELLASPRGTDIRFADTGDRPTRSQKREEQQERRDAKAAARAELEAERKAGIWTESVSGRRAAQPIKESGLDSGDES</sequence>
<keyword id="KW-0963">Cytoplasm</keyword>
<keyword id="KW-0342">GTP-binding</keyword>
<keyword id="KW-0378">Hydrolase</keyword>
<keyword id="KW-0460">Magnesium</keyword>
<keyword id="KW-0479">Metal-binding</keyword>
<keyword id="KW-0547">Nucleotide-binding</keyword>
<feature type="chain" id="PRO_0000385705" description="GTPase Obg">
    <location>
        <begin position="1"/>
        <end position="529"/>
    </location>
</feature>
<feature type="domain" description="Obg" evidence="3">
    <location>
        <begin position="2"/>
        <end position="159"/>
    </location>
</feature>
<feature type="domain" description="OBG-type G" evidence="1">
    <location>
        <begin position="160"/>
        <end position="343"/>
    </location>
</feature>
<feature type="domain" description="OCT" evidence="2">
    <location>
        <begin position="363"/>
        <end position="447"/>
    </location>
</feature>
<feature type="region of interest" description="Disordered" evidence="4">
    <location>
        <begin position="461"/>
        <end position="529"/>
    </location>
</feature>
<feature type="compositionally biased region" description="Basic and acidic residues" evidence="4">
    <location>
        <begin position="462"/>
        <end position="502"/>
    </location>
</feature>
<feature type="binding site" evidence="1">
    <location>
        <begin position="166"/>
        <end position="173"/>
    </location>
    <ligand>
        <name>GTP</name>
        <dbReference type="ChEBI" id="CHEBI:37565"/>
    </ligand>
</feature>
<feature type="binding site" evidence="1">
    <location>
        <position position="173"/>
    </location>
    <ligand>
        <name>Mg(2+)</name>
        <dbReference type="ChEBI" id="CHEBI:18420"/>
    </ligand>
</feature>
<feature type="binding site" evidence="1">
    <location>
        <begin position="191"/>
        <end position="195"/>
    </location>
    <ligand>
        <name>GTP</name>
        <dbReference type="ChEBI" id="CHEBI:37565"/>
    </ligand>
</feature>
<feature type="binding site" evidence="1">
    <location>
        <position position="193"/>
    </location>
    <ligand>
        <name>Mg(2+)</name>
        <dbReference type="ChEBI" id="CHEBI:18420"/>
    </ligand>
</feature>
<feature type="binding site" evidence="1">
    <location>
        <begin position="212"/>
        <end position="215"/>
    </location>
    <ligand>
        <name>GTP</name>
        <dbReference type="ChEBI" id="CHEBI:37565"/>
    </ligand>
</feature>
<feature type="binding site" evidence="1">
    <location>
        <begin position="295"/>
        <end position="298"/>
    </location>
    <ligand>
        <name>GTP</name>
        <dbReference type="ChEBI" id="CHEBI:37565"/>
    </ligand>
</feature>
<feature type="binding site" evidence="1">
    <location>
        <begin position="324"/>
        <end position="326"/>
    </location>
    <ligand>
        <name>GTP</name>
        <dbReference type="ChEBI" id="CHEBI:37565"/>
    </ligand>
</feature>
<evidence type="ECO:0000255" key="1">
    <source>
        <dbReference type="HAMAP-Rule" id="MF_01454"/>
    </source>
</evidence>
<evidence type="ECO:0000255" key="2">
    <source>
        <dbReference type="PROSITE-ProRule" id="PRU01229"/>
    </source>
</evidence>
<evidence type="ECO:0000255" key="3">
    <source>
        <dbReference type="PROSITE-ProRule" id="PRU01231"/>
    </source>
</evidence>
<evidence type="ECO:0000256" key="4">
    <source>
        <dbReference type="SAM" id="MobiDB-lite"/>
    </source>
</evidence>
<dbReference type="EC" id="3.6.5.-" evidence="1"/>
<dbReference type="EMBL" id="CP001341">
    <property type="protein sequence ID" value="ACL40111.1"/>
    <property type="molecule type" value="Genomic_DNA"/>
</dbReference>
<dbReference type="RefSeq" id="WP_015937329.1">
    <property type="nucleotide sequence ID" value="NC_011886.1"/>
</dbReference>
<dbReference type="SMR" id="B8H9P2"/>
<dbReference type="STRING" id="452863.Achl_2143"/>
<dbReference type="KEGG" id="ach:Achl_2143"/>
<dbReference type="eggNOG" id="COG0536">
    <property type="taxonomic scope" value="Bacteria"/>
</dbReference>
<dbReference type="HOGENOM" id="CLU_011747_1_1_11"/>
<dbReference type="OrthoDB" id="9807318at2"/>
<dbReference type="Proteomes" id="UP000002505">
    <property type="component" value="Chromosome"/>
</dbReference>
<dbReference type="GO" id="GO:0005737">
    <property type="term" value="C:cytoplasm"/>
    <property type="evidence" value="ECO:0007669"/>
    <property type="project" value="UniProtKB-SubCell"/>
</dbReference>
<dbReference type="GO" id="GO:0005525">
    <property type="term" value="F:GTP binding"/>
    <property type="evidence" value="ECO:0007669"/>
    <property type="project" value="UniProtKB-UniRule"/>
</dbReference>
<dbReference type="GO" id="GO:0003924">
    <property type="term" value="F:GTPase activity"/>
    <property type="evidence" value="ECO:0007669"/>
    <property type="project" value="UniProtKB-UniRule"/>
</dbReference>
<dbReference type="GO" id="GO:0000287">
    <property type="term" value="F:magnesium ion binding"/>
    <property type="evidence" value="ECO:0007669"/>
    <property type="project" value="InterPro"/>
</dbReference>
<dbReference type="GO" id="GO:0042254">
    <property type="term" value="P:ribosome biogenesis"/>
    <property type="evidence" value="ECO:0007669"/>
    <property type="project" value="UniProtKB-UniRule"/>
</dbReference>
<dbReference type="CDD" id="cd01898">
    <property type="entry name" value="Obg"/>
    <property type="match status" value="1"/>
</dbReference>
<dbReference type="FunFam" id="2.70.210.12:FF:000001">
    <property type="entry name" value="GTPase Obg"/>
    <property type="match status" value="1"/>
</dbReference>
<dbReference type="Gene3D" id="3.30.300.350">
    <property type="entry name" value="GTP-binding protein OBG, C-terminal domain"/>
    <property type="match status" value="1"/>
</dbReference>
<dbReference type="Gene3D" id="2.70.210.12">
    <property type="entry name" value="GTP1/OBG domain"/>
    <property type="match status" value="1"/>
</dbReference>
<dbReference type="Gene3D" id="3.40.50.300">
    <property type="entry name" value="P-loop containing nucleotide triphosphate hydrolases"/>
    <property type="match status" value="1"/>
</dbReference>
<dbReference type="HAMAP" id="MF_01454">
    <property type="entry name" value="GTPase_Obg"/>
    <property type="match status" value="1"/>
</dbReference>
<dbReference type="InterPro" id="IPR031167">
    <property type="entry name" value="G_OBG"/>
</dbReference>
<dbReference type="InterPro" id="IPR006073">
    <property type="entry name" value="GTP-bd"/>
</dbReference>
<dbReference type="InterPro" id="IPR014100">
    <property type="entry name" value="GTP-bd_Obg/CgtA"/>
</dbReference>
<dbReference type="InterPro" id="IPR036346">
    <property type="entry name" value="GTP-bd_prot_GTP1/OBG_C_sf"/>
</dbReference>
<dbReference type="InterPro" id="IPR006074">
    <property type="entry name" value="GTP1-OBG_CS"/>
</dbReference>
<dbReference type="InterPro" id="IPR006169">
    <property type="entry name" value="GTP1_OBG_dom"/>
</dbReference>
<dbReference type="InterPro" id="IPR036726">
    <property type="entry name" value="GTP1_OBG_dom_sf"/>
</dbReference>
<dbReference type="InterPro" id="IPR045086">
    <property type="entry name" value="OBG_GTPase"/>
</dbReference>
<dbReference type="InterPro" id="IPR015349">
    <property type="entry name" value="OCT_dom"/>
</dbReference>
<dbReference type="InterPro" id="IPR027417">
    <property type="entry name" value="P-loop_NTPase"/>
</dbReference>
<dbReference type="NCBIfam" id="TIGR02729">
    <property type="entry name" value="Obg_CgtA"/>
    <property type="match status" value="1"/>
</dbReference>
<dbReference type="NCBIfam" id="TIGR03595">
    <property type="entry name" value="Obg_CgtA_exten"/>
    <property type="match status" value="1"/>
</dbReference>
<dbReference type="NCBIfam" id="NF008954">
    <property type="entry name" value="PRK12296.1"/>
    <property type="match status" value="1"/>
</dbReference>
<dbReference type="NCBIfam" id="NF008955">
    <property type="entry name" value="PRK12297.1"/>
    <property type="match status" value="1"/>
</dbReference>
<dbReference type="NCBIfam" id="NF008956">
    <property type="entry name" value="PRK12299.1"/>
    <property type="match status" value="1"/>
</dbReference>
<dbReference type="PANTHER" id="PTHR11702">
    <property type="entry name" value="DEVELOPMENTALLY REGULATED GTP-BINDING PROTEIN-RELATED"/>
    <property type="match status" value="1"/>
</dbReference>
<dbReference type="PANTHER" id="PTHR11702:SF31">
    <property type="entry name" value="MITOCHONDRIAL RIBOSOME-ASSOCIATED GTPASE 2"/>
    <property type="match status" value="1"/>
</dbReference>
<dbReference type="Pfam" id="PF09269">
    <property type="entry name" value="DUF1967"/>
    <property type="match status" value="1"/>
</dbReference>
<dbReference type="Pfam" id="PF01018">
    <property type="entry name" value="GTP1_OBG"/>
    <property type="match status" value="1"/>
</dbReference>
<dbReference type="Pfam" id="PF01926">
    <property type="entry name" value="MMR_HSR1"/>
    <property type="match status" value="1"/>
</dbReference>
<dbReference type="PRINTS" id="PR00326">
    <property type="entry name" value="GTP1OBG"/>
</dbReference>
<dbReference type="SUPFAM" id="SSF102741">
    <property type="entry name" value="Obg GTP-binding protein C-terminal domain"/>
    <property type="match status" value="1"/>
</dbReference>
<dbReference type="SUPFAM" id="SSF82051">
    <property type="entry name" value="Obg GTP-binding protein N-terminal domain"/>
    <property type="match status" value="1"/>
</dbReference>
<dbReference type="SUPFAM" id="SSF52540">
    <property type="entry name" value="P-loop containing nucleoside triphosphate hydrolases"/>
    <property type="match status" value="1"/>
</dbReference>
<dbReference type="PROSITE" id="PS51710">
    <property type="entry name" value="G_OBG"/>
    <property type="match status" value="1"/>
</dbReference>
<dbReference type="PROSITE" id="PS00905">
    <property type="entry name" value="GTP1_OBG"/>
    <property type="match status" value="1"/>
</dbReference>
<dbReference type="PROSITE" id="PS51883">
    <property type="entry name" value="OBG"/>
    <property type="match status" value="1"/>
</dbReference>
<dbReference type="PROSITE" id="PS51881">
    <property type="entry name" value="OCT"/>
    <property type="match status" value="1"/>
</dbReference>
<accession>B8H9P2</accession>
<protein>
    <recommendedName>
        <fullName evidence="1">GTPase Obg</fullName>
        <ecNumber evidence="1">3.6.5.-</ecNumber>
    </recommendedName>
    <alternativeName>
        <fullName evidence="1">GTP-binding protein Obg</fullName>
    </alternativeName>
</protein>
<name>OBG_PSECP</name>
<organism>
    <name type="scientific">Pseudarthrobacter chlorophenolicus (strain ATCC 700700 / DSM 12829 / CIP 107037 / JCM 12360 / KCTC 9906 / NCIMB 13794 / A6)</name>
    <name type="common">Arthrobacter chlorophenolicus</name>
    <dbReference type="NCBI Taxonomy" id="452863"/>
    <lineage>
        <taxon>Bacteria</taxon>
        <taxon>Bacillati</taxon>
        <taxon>Actinomycetota</taxon>
        <taxon>Actinomycetes</taxon>
        <taxon>Micrococcales</taxon>
        <taxon>Micrococcaceae</taxon>
        <taxon>Pseudarthrobacter</taxon>
    </lineage>
</organism>
<gene>
    <name evidence="1" type="primary">obg</name>
    <name type="ordered locus">Achl_2143</name>
</gene>
<comment type="function">
    <text evidence="1">An essential GTPase which binds GTP, GDP and possibly (p)ppGpp with moderate affinity, with high nucleotide exchange rates and a fairly low GTP hydrolysis rate. Plays a role in control of the cell cycle, stress response, ribosome biogenesis and in those bacteria that undergo differentiation, in morphogenesis control.</text>
</comment>
<comment type="cofactor">
    <cofactor evidence="1">
        <name>Mg(2+)</name>
        <dbReference type="ChEBI" id="CHEBI:18420"/>
    </cofactor>
</comment>
<comment type="subunit">
    <text evidence="1">Monomer.</text>
</comment>
<comment type="subcellular location">
    <subcellularLocation>
        <location evidence="1">Cytoplasm</location>
    </subcellularLocation>
</comment>
<comment type="similarity">
    <text evidence="1">Belongs to the TRAFAC class OBG-HflX-like GTPase superfamily. OBG GTPase family.</text>
</comment>
<reference key="1">
    <citation type="submission" date="2009-01" db="EMBL/GenBank/DDBJ databases">
        <title>Complete sequence of chromosome of Arthrobacter chlorophenolicus A6.</title>
        <authorList>
            <consortium name="US DOE Joint Genome Institute"/>
            <person name="Lucas S."/>
            <person name="Copeland A."/>
            <person name="Lapidus A."/>
            <person name="Glavina del Rio T."/>
            <person name="Tice H."/>
            <person name="Bruce D."/>
            <person name="Goodwin L."/>
            <person name="Pitluck S."/>
            <person name="Goltsman E."/>
            <person name="Clum A."/>
            <person name="Larimer F."/>
            <person name="Land M."/>
            <person name="Hauser L."/>
            <person name="Kyrpides N."/>
            <person name="Mikhailova N."/>
            <person name="Jansson J."/>
            <person name="Richardson P."/>
        </authorList>
    </citation>
    <scope>NUCLEOTIDE SEQUENCE [LARGE SCALE GENOMIC DNA]</scope>
    <source>
        <strain>ATCC 700700 / DSM 12829 / CIP 107037 / JCM 12360 / KCTC 9906 / NCIMB 13794 / A6</strain>
    </source>
</reference>